<dbReference type="EMBL" id="AL139247">
    <property type="status" value="NOT_ANNOTATED_CDS"/>
    <property type="molecule type" value="Genomic_DNA"/>
</dbReference>
<dbReference type="EMBL" id="BC113446">
    <property type="protein sequence ID" value="AAI13447.1"/>
    <property type="molecule type" value="mRNA"/>
</dbReference>
<dbReference type="EMBL" id="BC113448">
    <property type="protein sequence ID" value="AAI13449.1"/>
    <property type="molecule type" value="mRNA"/>
</dbReference>
<dbReference type="CCDS" id="CCDS1022.1"/>
<dbReference type="RefSeq" id="NP_001374151.1">
    <property type="nucleotide sequence ID" value="NM_001387222.1"/>
</dbReference>
<dbReference type="RefSeq" id="NP_848133.1">
    <property type="nucleotide sequence ID" value="NM_178356.3"/>
</dbReference>
<dbReference type="BioGRID" id="128277">
    <property type="interactions" value="80"/>
</dbReference>
<dbReference type="FunCoup" id="Q5TA78">
    <property type="interactions" value="24"/>
</dbReference>
<dbReference type="IntAct" id="Q5TA78">
    <property type="interactions" value="67"/>
</dbReference>
<dbReference type="STRING" id="9606.ENSP00000357766"/>
<dbReference type="iPTMnet" id="Q5TA78"/>
<dbReference type="PhosphoSitePlus" id="Q5TA78"/>
<dbReference type="BioMuta" id="LCE4A"/>
<dbReference type="DMDM" id="74745785"/>
<dbReference type="MassIVE" id="Q5TA78"/>
<dbReference type="PaxDb" id="9606-ENSP00000357766"/>
<dbReference type="PeptideAtlas" id="Q5TA78"/>
<dbReference type="Antibodypedia" id="82218">
    <property type="antibodies" value="1 antibodies from 1 providers"/>
</dbReference>
<dbReference type="DNASU" id="199834"/>
<dbReference type="Ensembl" id="ENST00000368777.2">
    <property type="protein sequence ID" value="ENSP00000357766.1"/>
    <property type="gene ID" value="ENSG00000187170.6"/>
</dbReference>
<dbReference type="GeneID" id="199834"/>
<dbReference type="KEGG" id="hsa:199834"/>
<dbReference type="MANE-Select" id="ENST00000368777.2">
    <property type="protein sequence ID" value="ENSP00000357766.1"/>
    <property type="RefSeq nucleotide sequence ID" value="NM_001387222.1"/>
    <property type="RefSeq protein sequence ID" value="NP_001374151.1"/>
</dbReference>
<dbReference type="UCSC" id="uc001fak.2">
    <property type="organism name" value="human"/>
</dbReference>
<dbReference type="AGR" id="HGNC:16613"/>
<dbReference type="CTD" id="199834"/>
<dbReference type="GeneCards" id="LCE4A"/>
<dbReference type="HGNC" id="HGNC:16613">
    <property type="gene designation" value="LCE4A"/>
</dbReference>
<dbReference type="HPA" id="ENSG00000187170">
    <property type="expression patterns" value="Tissue enriched (skin)"/>
</dbReference>
<dbReference type="MIM" id="612618">
    <property type="type" value="gene"/>
</dbReference>
<dbReference type="neXtProt" id="NX_Q5TA78"/>
<dbReference type="OpenTargets" id="ENSG00000187170"/>
<dbReference type="PharmGKB" id="PA38172"/>
<dbReference type="VEuPathDB" id="HostDB:ENSG00000187170"/>
<dbReference type="eggNOG" id="ENOG502TKF4">
    <property type="taxonomic scope" value="Eukaryota"/>
</dbReference>
<dbReference type="GeneTree" id="ENSGT01090000263307"/>
<dbReference type="HOGENOM" id="CLU_152038_0_0_1"/>
<dbReference type="InParanoid" id="Q5TA78"/>
<dbReference type="OMA" id="CPIPKYP"/>
<dbReference type="PAN-GO" id="Q5TA78">
    <property type="GO annotations" value="0 GO annotations based on evolutionary models"/>
</dbReference>
<dbReference type="PathwayCommons" id="Q5TA78"/>
<dbReference type="Reactome" id="R-HSA-6809371">
    <property type="pathway name" value="Formation of the cornified envelope"/>
</dbReference>
<dbReference type="SignaLink" id="Q5TA78"/>
<dbReference type="BioGRID-ORCS" id="199834">
    <property type="hits" value="6 hits in 1096 CRISPR screens"/>
</dbReference>
<dbReference type="GenomeRNAi" id="199834"/>
<dbReference type="Pharos" id="Q5TA78">
    <property type="development level" value="Tdark"/>
</dbReference>
<dbReference type="PRO" id="PR:Q5TA78"/>
<dbReference type="Proteomes" id="UP000005640">
    <property type="component" value="Chromosome 1"/>
</dbReference>
<dbReference type="RNAct" id="Q5TA78">
    <property type="molecule type" value="protein"/>
</dbReference>
<dbReference type="Bgee" id="ENSG00000187170">
    <property type="expression patterns" value="Expressed in stromal cell of endometrium and 10 other cell types or tissues"/>
</dbReference>
<dbReference type="GO" id="GO:0042802">
    <property type="term" value="F:identical protein binding"/>
    <property type="evidence" value="ECO:0000353"/>
    <property type="project" value="IntAct"/>
</dbReference>
<dbReference type="GO" id="GO:0031424">
    <property type="term" value="P:keratinization"/>
    <property type="evidence" value="ECO:0007669"/>
    <property type="project" value="UniProtKB-KW"/>
</dbReference>
<dbReference type="InterPro" id="IPR028205">
    <property type="entry name" value="LCE"/>
</dbReference>
<dbReference type="Pfam" id="PF14672">
    <property type="entry name" value="LCE"/>
    <property type="match status" value="1"/>
</dbReference>
<gene>
    <name type="primary">LCE4A</name>
    <name type="synonym">LEP8</name>
    <name type="synonym">SPRL4A</name>
</gene>
<protein>
    <recommendedName>
        <fullName>Late cornified envelope protein 4A</fullName>
    </recommendedName>
    <alternativeName>
        <fullName>Late envelope protein 8</fullName>
    </alternativeName>
    <alternativeName>
        <fullName>Small proline-rich-like epidermal differentiation complex protein 4A</fullName>
    </alternativeName>
</protein>
<comment type="function">
    <text>Precursors of the cornified envelope of the stratum corneum.</text>
</comment>
<comment type="subunit">
    <text evidence="3">Interacts with CYSRT1; the interaction is direct.</text>
</comment>
<comment type="interaction">
    <interactant intactId="EBI-10246358">
        <id>Q5TA78</id>
    </interactant>
    <interactant intactId="EBI-10173507">
        <id>Q6UY14-3</id>
        <label>ADAMTSL4</label>
    </interactant>
    <organismsDiffer>false</organismsDiffer>
    <experiments>6</experiments>
</comment>
<comment type="interaction">
    <interactant intactId="EBI-10246358">
        <id>Q5TA78</id>
    </interactant>
    <interactant intactId="EBI-713677">
        <id>Q9UGL9</id>
        <label>CRCT1</label>
    </interactant>
    <organismsDiffer>false</organismsDiffer>
    <experiments>3</experiments>
</comment>
<comment type="interaction">
    <interactant intactId="EBI-10246358">
        <id>Q5TA78</id>
    </interactant>
    <interactant intactId="EBI-10192698">
        <id>Q02930-3</id>
        <label>CREB5</label>
    </interactant>
    <organismsDiffer>false</organismsDiffer>
    <experiments>3</experiments>
</comment>
<comment type="interaction">
    <interactant intactId="EBI-10246358">
        <id>Q5TA78</id>
    </interactant>
    <interactant intactId="EBI-3867333">
        <id>A8MQ03</id>
        <label>CYSRT1</label>
    </interactant>
    <organismsDiffer>false</organismsDiffer>
    <experiments>7</experiments>
</comment>
<comment type="interaction">
    <interactant intactId="EBI-10246358">
        <id>Q5TA78</id>
    </interactant>
    <interactant intactId="EBI-9050116">
        <id>Q9BTY2</id>
        <label>FUCA2</label>
    </interactant>
    <organismsDiffer>false</organismsDiffer>
    <experiments>3</experiments>
</comment>
<comment type="interaction">
    <interactant intactId="EBI-10246358">
        <id>Q5TA78</id>
    </interactant>
    <interactant intactId="EBI-747754">
        <id>P28799</id>
        <label>GRN</label>
    </interactant>
    <organismsDiffer>false</organismsDiffer>
    <experiments>4</experiments>
</comment>
<comment type="interaction">
    <interactant intactId="EBI-10246358">
        <id>Q5TA78</id>
    </interactant>
    <interactant intactId="EBI-740785">
        <id>P49639</id>
        <label>HOXA1</label>
    </interactant>
    <organismsDiffer>false</organismsDiffer>
    <experiments>9</experiments>
</comment>
<comment type="interaction">
    <interactant intactId="EBI-10246358">
        <id>Q5TA78</id>
    </interactant>
    <interactant intactId="EBI-3918847">
        <id>Q9H2F3</id>
        <label>HSD3B7</label>
    </interactant>
    <organismsDiffer>false</organismsDiffer>
    <experiments>3</experiments>
</comment>
<comment type="interaction">
    <interactant intactId="EBI-10246358">
        <id>Q5TA78</id>
    </interactant>
    <interactant intactId="EBI-948001">
        <id>Q15323</id>
        <label>KRT31</label>
    </interactant>
    <organismsDiffer>false</organismsDiffer>
    <experiments>3</experiments>
</comment>
<comment type="interaction">
    <interactant intactId="EBI-10246358">
        <id>Q5TA78</id>
    </interactant>
    <interactant intactId="EBI-11959885">
        <id>Q07627</id>
        <label>KRTAP1-1</label>
    </interactant>
    <organismsDiffer>false</organismsDiffer>
    <experiments>3</experiments>
</comment>
<comment type="interaction">
    <interactant intactId="EBI-10246358">
        <id>Q5TA78</id>
    </interactant>
    <interactant intactId="EBI-11749135">
        <id>Q8IUG1</id>
        <label>KRTAP1-3</label>
    </interactant>
    <organismsDiffer>false</organismsDiffer>
    <experiments>3</experiments>
</comment>
<comment type="interaction">
    <interactant intactId="EBI-10246358">
        <id>Q5TA78</id>
    </interactant>
    <interactant intactId="EBI-11741292">
        <id>Q9BYS1</id>
        <label>KRTAP1-5</label>
    </interactant>
    <organismsDiffer>false</organismsDiffer>
    <experiments>3</experiments>
</comment>
<comment type="interaction">
    <interactant intactId="EBI-10246358">
        <id>Q5TA78</id>
    </interactant>
    <interactant intactId="EBI-10172150">
        <id>P60370</id>
        <label>KRTAP10-5</label>
    </interactant>
    <organismsDiffer>false</organismsDiffer>
    <experiments>3</experiments>
</comment>
<comment type="interaction">
    <interactant intactId="EBI-10246358">
        <id>Q5TA78</id>
    </interactant>
    <interactant intactId="EBI-12012928">
        <id>P60371</id>
        <label>KRTAP10-6</label>
    </interactant>
    <organismsDiffer>false</organismsDiffer>
    <experiments>3</experiments>
</comment>
<comment type="interaction">
    <interactant intactId="EBI-10246358">
        <id>Q5TA78</id>
    </interactant>
    <interactant intactId="EBI-10172290">
        <id>P60409</id>
        <label>KRTAP10-7</label>
    </interactant>
    <organismsDiffer>false</organismsDiffer>
    <experiments>8</experiments>
</comment>
<comment type="interaction">
    <interactant intactId="EBI-10246358">
        <id>Q5TA78</id>
    </interactant>
    <interactant intactId="EBI-10171774">
        <id>P60410</id>
        <label>KRTAP10-8</label>
    </interactant>
    <organismsDiffer>false</organismsDiffer>
    <experiments>9</experiments>
</comment>
<comment type="interaction">
    <interactant intactId="EBI-10246358">
        <id>Q5TA78</id>
    </interactant>
    <interactant intactId="EBI-10172052">
        <id>P60411</id>
        <label>KRTAP10-9</label>
    </interactant>
    <organismsDiffer>false</organismsDiffer>
    <experiments>6</experiments>
</comment>
<comment type="interaction">
    <interactant intactId="EBI-10246358">
        <id>Q5TA78</id>
    </interactant>
    <interactant intactId="EBI-10176379">
        <id>P59991</id>
        <label>KRTAP12-2</label>
    </interactant>
    <organismsDiffer>false</organismsDiffer>
    <experiments>3</experiments>
</comment>
<comment type="interaction">
    <interactant intactId="EBI-10246358">
        <id>Q5TA78</id>
    </interactant>
    <interactant intactId="EBI-11953334">
        <id>P60328</id>
        <label>KRTAP12-3</label>
    </interactant>
    <organismsDiffer>false</organismsDiffer>
    <experiments>6</experiments>
</comment>
<comment type="interaction">
    <interactant intactId="EBI-10246358">
        <id>Q5TA78</id>
    </interactant>
    <interactant intactId="EBI-10176396">
        <id>P60329</id>
        <label>KRTAP12-4</label>
    </interactant>
    <organismsDiffer>false</organismsDiffer>
    <experiments>3</experiments>
</comment>
<comment type="interaction">
    <interactant intactId="EBI-10246358">
        <id>Q5TA78</id>
    </interactant>
    <interactant intactId="EBI-11988175">
        <id>Q9BYP8</id>
        <label>KRTAP17-1</label>
    </interactant>
    <organismsDiffer>false</organismsDiffer>
    <experiments>3</experiments>
</comment>
<comment type="interaction">
    <interactant intactId="EBI-10246358">
        <id>Q5TA78</id>
    </interactant>
    <interactant intactId="EBI-9996449">
        <id>Q9BYR8</id>
        <label>KRTAP3-1</label>
    </interactant>
    <organismsDiffer>false</organismsDiffer>
    <experiments>3</experiments>
</comment>
<comment type="interaction">
    <interactant intactId="EBI-10246358">
        <id>Q5TA78</id>
    </interactant>
    <interactant intactId="EBI-751260">
        <id>Q9BYR7</id>
        <label>KRTAP3-2</label>
    </interactant>
    <organismsDiffer>false</organismsDiffer>
    <experiments>6</experiments>
</comment>
<comment type="interaction">
    <interactant intactId="EBI-10246358">
        <id>Q5TA78</id>
    </interactant>
    <interactant intactId="EBI-3957694">
        <id>Q9BYR6</id>
        <label>KRTAP3-3</label>
    </interactant>
    <organismsDiffer>false</organismsDiffer>
    <experiments>3</experiments>
</comment>
<comment type="interaction">
    <interactant intactId="EBI-10246358">
        <id>Q5TA78</id>
    </interactant>
    <interactant intactId="EBI-10302392">
        <id>Q9BYQ6</id>
        <label>KRTAP4-11</label>
    </interactant>
    <organismsDiffer>false</organismsDiffer>
    <experiments>3</experiments>
</comment>
<comment type="interaction">
    <interactant intactId="EBI-10246358">
        <id>Q5TA78</id>
    </interactant>
    <interactant intactId="EBI-739863">
        <id>Q9BQ66</id>
        <label>KRTAP4-12</label>
    </interactant>
    <organismsDiffer>false</organismsDiffer>
    <experiments>9</experiments>
</comment>
<comment type="interaction">
    <interactant intactId="EBI-10246358">
        <id>Q5TA78</id>
    </interactant>
    <interactant intactId="EBI-10172511">
        <id>Q9BYR5</id>
        <label>KRTAP4-2</label>
    </interactant>
    <organismsDiffer>false</organismsDiffer>
    <experiments>6</experiments>
</comment>
<comment type="interaction">
    <interactant intactId="EBI-10246358">
        <id>Q5TA78</id>
    </interactant>
    <interactant intactId="EBI-11958132">
        <id>Q9BYR3</id>
        <label>KRTAP4-4</label>
    </interactant>
    <organismsDiffer>false</organismsDiffer>
    <experiments>3</experiments>
</comment>
<comment type="interaction">
    <interactant intactId="EBI-10246358">
        <id>Q5TA78</id>
    </interactant>
    <interactant intactId="EBI-11993254">
        <id>Q9BYR2</id>
        <label>KRTAP4-5</label>
    </interactant>
    <organismsDiffer>false</organismsDiffer>
    <experiments>5</experiments>
</comment>
<comment type="interaction">
    <interactant intactId="EBI-10246358">
        <id>Q5TA78</id>
    </interactant>
    <interactant intactId="EBI-11993296">
        <id>Q6L8G4</id>
        <label>KRTAP5-11</label>
    </interactant>
    <organismsDiffer>false</organismsDiffer>
    <experiments>3</experiments>
</comment>
<comment type="interaction">
    <interactant intactId="EBI-10246358">
        <id>Q5TA78</id>
    </interactant>
    <interactant intactId="EBI-11974251">
        <id>Q6L8H2</id>
        <label>KRTAP5-3</label>
    </interactant>
    <organismsDiffer>false</organismsDiffer>
    <experiments>3</experiments>
</comment>
<comment type="interaction">
    <interactant intactId="EBI-10246358">
        <id>Q5TA78</id>
    </interactant>
    <interactant intactId="EBI-11963072">
        <id>Q6L8H1</id>
        <label>KRTAP5-4</label>
    </interactant>
    <organismsDiffer>false</organismsDiffer>
    <experiments>3</experiments>
</comment>
<comment type="interaction">
    <interactant intactId="EBI-10246358">
        <id>Q5TA78</id>
    </interactant>
    <interactant intactId="EBI-10250562">
        <id>Q6L8G9</id>
        <label>KRTAP5-6</label>
    </interactant>
    <organismsDiffer>false</organismsDiffer>
    <experiments>3</experiments>
</comment>
<comment type="interaction">
    <interactant intactId="EBI-10246358">
        <id>Q5TA78</id>
    </interactant>
    <interactant intactId="EBI-11987425">
        <id>Q6L8G8</id>
        <label>KRTAP5-7</label>
    </interactant>
    <organismsDiffer>false</organismsDiffer>
    <experiments>3</experiments>
</comment>
<comment type="interaction">
    <interactant intactId="EBI-10246358">
        <id>Q5TA78</id>
    </interactant>
    <interactant intactId="EBI-3958099">
        <id>P26371</id>
        <label>KRTAP5-9</label>
    </interactant>
    <organismsDiffer>false</organismsDiffer>
    <experiments>6</experiments>
</comment>
<comment type="interaction">
    <interactant intactId="EBI-10246358">
        <id>Q5TA78</id>
    </interactant>
    <interactant intactId="EBI-1044640">
        <id>Q9BYQ4</id>
        <label>KRTAP9-2</label>
    </interactant>
    <organismsDiffer>false</organismsDiffer>
    <experiments>9</experiments>
</comment>
<comment type="interaction">
    <interactant intactId="EBI-10246358">
        <id>Q5TA78</id>
    </interactant>
    <interactant intactId="EBI-1043191">
        <id>Q9BYQ3</id>
        <label>KRTAP9-3</label>
    </interactant>
    <organismsDiffer>false</organismsDiffer>
    <experiments>3</experiments>
</comment>
<comment type="interaction">
    <interactant intactId="EBI-10246358">
        <id>Q5TA78</id>
    </interactant>
    <interactant intactId="EBI-10185730">
        <id>Q9BYQ2</id>
        <label>KRTAP9-4</label>
    </interactant>
    <organismsDiffer>false</organismsDiffer>
    <experiments>3</experiments>
</comment>
<comment type="interaction">
    <interactant intactId="EBI-10246358">
        <id>Q5TA78</id>
    </interactant>
    <interactant intactId="EBI-11958364">
        <id>Q9BYQ0</id>
        <label>KRTAP9-8</label>
    </interactant>
    <organismsDiffer>false</organismsDiffer>
    <experiments>3</experiments>
</comment>
<comment type="interaction">
    <interactant intactId="EBI-10246358">
        <id>Q5TA78</id>
    </interactant>
    <interactant intactId="EBI-11962058">
        <id>Q5T7P2</id>
        <label>LCE1A</label>
    </interactant>
    <organismsDiffer>false</organismsDiffer>
    <experiments>3</experiments>
</comment>
<comment type="interaction">
    <interactant intactId="EBI-10246358">
        <id>Q5TA78</id>
    </interactant>
    <interactant intactId="EBI-10245913">
        <id>Q5T7P3</id>
        <label>LCE1B</label>
    </interactant>
    <organismsDiffer>false</organismsDiffer>
    <experiments>3</experiments>
</comment>
<comment type="interaction">
    <interactant intactId="EBI-10246358">
        <id>Q5TA78</id>
    </interactant>
    <interactant intactId="EBI-12224199">
        <id>Q5T751</id>
        <label>LCE1C</label>
    </interactant>
    <organismsDiffer>false</organismsDiffer>
    <experiments>3</experiments>
</comment>
<comment type="interaction">
    <interactant intactId="EBI-10246358">
        <id>Q5TA78</id>
    </interactant>
    <interactant intactId="EBI-11955335">
        <id>Q5T753</id>
        <label>LCE1E</label>
    </interactant>
    <organismsDiffer>false</organismsDiffer>
    <experiments>6</experiments>
</comment>
<comment type="interaction">
    <interactant intactId="EBI-10246358">
        <id>Q5TA78</id>
    </interactant>
    <interactant intactId="EBI-11478468">
        <id>O14633</id>
        <label>LCE2B</label>
    </interactant>
    <organismsDiffer>false</organismsDiffer>
    <experiments>3</experiments>
</comment>
<comment type="interaction">
    <interactant intactId="EBI-10246358">
        <id>Q5TA78</id>
    </interactant>
    <interactant intactId="EBI-11973993">
        <id>Q5TA81</id>
        <label>LCE2C</label>
    </interactant>
    <organismsDiffer>false</organismsDiffer>
    <experiments>8</experiments>
</comment>
<comment type="interaction">
    <interactant intactId="EBI-10246358">
        <id>Q5TA78</id>
    </interactant>
    <interactant intactId="EBI-10246358">
        <id>Q5TA78</id>
        <label>LCE4A</label>
    </interactant>
    <organismsDiffer>false</organismsDiffer>
    <experiments>3</experiments>
</comment>
<comment type="interaction">
    <interactant intactId="EBI-10246358">
        <id>Q5TA78</id>
    </interactant>
    <interactant intactId="EBI-11955689">
        <id>Q5TCM9</id>
        <label>LCE5A</label>
    </interactant>
    <organismsDiffer>false</organismsDiffer>
    <experiments>3</experiments>
</comment>
<comment type="interaction">
    <interactant intactId="EBI-10246358">
        <id>Q5TA78</id>
    </interactant>
    <interactant intactId="EBI-724076">
        <id>Q99750</id>
        <label>MDFI</label>
    </interactant>
    <organismsDiffer>false</organismsDiffer>
    <experiments>6</experiments>
</comment>
<comment type="interaction">
    <interactant intactId="EBI-10246358">
        <id>Q5TA78</id>
    </interactant>
    <interactant intactId="EBI-748397">
        <id>P50222</id>
        <label>MEOX2</label>
    </interactant>
    <organismsDiffer>false</organismsDiffer>
    <experiments>3</experiments>
</comment>
<comment type="interaction">
    <interactant intactId="EBI-10246358">
        <id>Q5TA78</id>
    </interactant>
    <interactant intactId="EBI-22310682">
        <id>P0DPK4</id>
        <label>NOTCH2NLC</label>
    </interactant>
    <organismsDiffer>false</organismsDiffer>
    <experiments>3</experiments>
</comment>
<comment type="interaction">
    <interactant intactId="EBI-10246358">
        <id>Q5TA78</id>
    </interactant>
    <interactant intactId="EBI-740446">
        <id>P32242</id>
        <label>OTX1</label>
    </interactant>
    <organismsDiffer>false</organismsDiffer>
    <experiments>3</experiments>
</comment>
<comment type="interaction">
    <interactant intactId="EBI-10246358">
        <id>Q5TA78</id>
    </interactant>
    <interactant intactId="EBI-395883">
        <id>P07237</id>
        <label>P4HB</label>
    </interactant>
    <organismsDiffer>false</organismsDiffer>
    <experiments>3</experiments>
</comment>
<comment type="interaction">
    <interactant intactId="EBI-10246358">
        <id>Q5TA78</id>
    </interactant>
    <interactant intactId="EBI-740019">
        <id>O15162</id>
        <label>PLSCR1</label>
    </interactant>
    <organismsDiffer>false</organismsDiffer>
    <experiments>3</experiments>
</comment>
<comment type="interaction">
    <interactant intactId="EBI-10246358">
        <id>Q5TA78</id>
    </interactant>
    <interactant intactId="EBI-750734">
        <id>Q9NRY6</id>
        <label>PLSCR3</label>
    </interactant>
    <organismsDiffer>false</organismsDiffer>
    <experiments>6</experiments>
</comment>
<comment type="interaction">
    <interactant intactId="EBI-10246358">
        <id>Q5TA78</id>
    </interactant>
    <interactant intactId="EBI-3918154">
        <id>Q9UGC6</id>
        <label>RGS17</label>
    </interactant>
    <organismsDiffer>false</organismsDiffer>
    <experiments>3</experiments>
</comment>
<comment type="interaction">
    <interactant intactId="EBI-10246358">
        <id>Q5TA78</id>
    </interactant>
    <interactant intactId="EBI-874907">
        <id>P49795</id>
        <label>RGS19</label>
    </interactant>
    <organismsDiffer>false</organismsDiffer>
    <experiments>3</experiments>
</comment>
<comment type="interaction">
    <interactant intactId="EBI-10246358">
        <id>Q5TA78</id>
    </interactant>
    <interactant intactId="EBI-1052678">
        <id>O76081</id>
        <label>RGS20</label>
    </interactant>
    <organismsDiffer>false</organismsDiffer>
    <experiments>3</experiments>
</comment>
<comment type="interaction">
    <interactant intactId="EBI-10246358">
        <id>Q5TA78</id>
    </interactant>
    <interactant intactId="EBI-10178530">
        <id>O76081-6</id>
        <label>RGS20</label>
    </interactant>
    <organismsDiffer>false</organismsDiffer>
    <experiments>8</experiments>
</comment>
<comment type="interaction">
    <interactant intactId="EBI-10246358">
        <id>Q5TA78</id>
    </interactant>
    <interactant intactId="EBI-2129175">
        <id>Q6ZNA4</id>
        <label>RNF111</label>
    </interactant>
    <organismsDiffer>false</organismsDiffer>
    <experiments>3</experiments>
</comment>
<comment type="interaction">
    <interactant intactId="EBI-10246358">
        <id>Q5TA78</id>
    </interactant>
    <interactant intactId="EBI-1051105">
        <id>Q92504</id>
        <label>SLC39A7</label>
    </interactant>
    <organismsDiffer>false</organismsDiffer>
    <experiments>3</experiments>
</comment>
<comment type="interaction">
    <interactant intactId="EBI-10246358">
        <id>Q5TA78</id>
    </interactant>
    <interactant intactId="EBI-750494">
        <id>P49901</id>
        <label>SMCP</label>
    </interactant>
    <organismsDiffer>false</organismsDiffer>
    <experiments>6</experiments>
</comment>
<comment type="interaction">
    <interactant intactId="EBI-10246358">
        <id>Q5TA78</id>
    </interactant>
    <interactant intactId="EBI-3866665">
        <id>O43609</id>
        <label>SPRY1</label>
    </interactant>
    <organismsDiffer>false</organismsDiffer>
    <experiments>3</experiments>
</comment>
<comment type="interaction">
    <interactant intactId="EBI-10246358">
        <id>Q5TA78</id>
    </interactant>
    <interactant intactId="EBI-742487">
        <id>O43597</id>
        <label>SPRY2</label>
    </interactant>
    <organismsDiffer>false</organismsDiffer>
    <experiments>3</experiments>
</comment>
<comment type="interaction">
    <interactant intactId="EBI-10246358">
        <id>Q5TA78</id>
    </interactant>
    <interactant intactId="EBI-2562368">
        <id>P22735</id>
        <label>TGM1</label>
    </interactant>
    <organismsDiffer>false</organismsDiffer>
    <experiments>3</experiments>
</comment>
<comment type="interaction">
    <interactant intactId="EBI-10246358">
        <id>Q5TA78</id>
    </interactant>
    <interactant intactId="EBI-5235829">
        <id>Q8IWZ5</id>
        <label>TRIM42</label>
    </interactant>
    <organismsDiffer>false</organismsDiffer>
    <experiments>3</experiments>
</comment>
<comment type="interaction">
    <interactant intactId="EBI-10246358">
        <id>Q5TA78</id>
    </interactant>
    <interactant intactId="EBI-8652667">
        <id>O14817</id>
        <label>TSPAN4</label>
    </interactant>
    <organismsDiffer>false</organismsDiffer>
    <experiments>3</experiments>
</comment>
<comment type="interaction">
    <interactant intactId="EBI-10246358">
        <id>Q5TA78</id>
    </interactant>
    <interactant intactId="EBI-10249550">
        <id>Q6EMK4</id>
        <label>VASN</label>
    </interactant>
    <organismsDiffer>false</organismsDiffer>
    <experiments>3</experiments>
</comment>
<comment type="interaction">
    <interactant intactId="EBI-10246358">
        <id>Q5TA78</id>
    </interactant>
    <interactant intactId="EBI-11957238">
        <id>Q2TAL6</id>
        <label>VWC2</label>
    </interactant>
    <organismsDiffer>false</organismsDiffer>
    <experiments>3</experiments>
</comment>
<comment type="interaction">
    <interactant intactId="EBI-10246358">
        <id>Q5TA78</id>
    </interactant>
    <interactant intactId="EBI-625509">
        <id>Q8N720</id>
        <label>ZNF655</label>
    </interactant>
    <organismsDiffer>false</organismsDiffer>
    <experiments>3</experiments>
</comment>
<comment type="tissue specificity">
    <text evidence="2">Skin-specific. Expression was readily detected in adult trunk skin, adult arm skin, fetal skin, penal skin, vulva, esophagus and tongue. Not expressed in the cervix, rectum, lung, colon, or placenta.</text>
</comment>
<comment type="miscellaneous">
    <text>Belongs to the LCE cluster present on 1q21.</text>
</comment>
<comment type="similarity">
    <text evidence="4">Belongs to the LCE family.</text>
</comment>
<sequence length="99" mass="9980">MSCQQNQQQCQPPPKCPIPKYPPKCPSKCASSCPPPISSCCGSSSGGCGCCSSEGGGCCLSHHRHHRSHCHRPKSSNCYGSGSGQQSGGSGCCSGGGCC</sequence>
<organism>
    <name type="scientific">Homo sapiens</name>
    <name type="common">Human</name>
    <dbReference type="NCBI Taxonomy" id="9606"/>
    <lineage>
        <taxon>Eukaryota</taxon>
        <taxon>Metazoa</taxon>
        <taxon>Chordata</taxon>
        <taxon>Craniata</taxon>
        <taxon>Vertebrata</taxon>
        <taxon>Euteleostomi</taxon>
        <taxon>Mammalia</taxon>
        <taxon>Eutheria</taxon>
        <taxon>Euarchontoglires</taxon>
        <taxon>Primates</taxon>
        <taxon>Haplorrhini</taxon>
        <taxon>Catarrhini</taxon>
        <taxon>Hominidae</taxon>
        <taxon>Homo</taxon>
    </lineage>
</organism>
<accession>Q5TA78</accession>
<accession>Q14D97</accession>
<keyword id="KW-0417">Keratinization</keyword>
<keyword id="KW-1185">Reference proteome</keyword>
<name>LCE4A_HUMAN</name>
<feature type="chain" id="PRO_0000235338" description="Late cornified envelope protein 4A">
    <location>
        <begin position="1"/>
        <end position="99"/>
    </location>
</feature>
<feature type="region of interest" description="Disordered" evidence="1">
    <location>
        <begin position="78"/>
        <end position="99"/>
    </location>
</feature>
<feature type="compositionally biased region" description="Gly residues" evidence="1">
    <location>
        <begin position="81"/>
        <end position="99"/>
    </location>
</feature>
<feature type="sequence variant" id="VAR_053486" description="In dbSNP:rs10888510.">
    <original>G</original>
    <variation>V</variation>
    <location>
        <position position="95"/>
    </location>
</feature>
<proteinExistence type="evidence at protein level"/>
<reference key="1">
    <citation type="journal article" date="2006" name="Nature">
        <title>The DNA sequence and biological annotation of human chromosome 1.</title>
        <authorList>
            <person name="Gregory S.G."/>
            <person name="Barlow K.F."/>
            <person name="McLay K.E."/>
            <person name="Kaul R."/>
            <person name="Swarbreck D."/>
            <person name="Dunham A."/>
            <person name="Scott C.E."/>
            <person name="Howe K.L."/>
            <person name="Woodfine K."/>
            <person name="Spencer C.C.A."/>
            <person name="Jones M.C."/>
            <person name="Gillson C."/>
            <person name="Searle S."/>
            <person name="Zhou Y."/>
            <person name="Kokocinski F."/>
            <person name="McDonald L."/>
            <person name="Evans R."/>
            <person name="Phillips K."/>
            <person name="Atkinson A."/>
            <person name="Cooper R."/>
            <person name="Jones C."/>
            <person name="Hall R.E."/>
            <person name="Andrews T.D."/>
            <person name="Lloyd C."/>
            <person name="Ainscough R."/>
            <person name="Almeida J.P."/>
            <person name="Ambrose K.D."/>
            <person name="Anderson F."/>
            <person name="Andrew R.W."/>
            <person name="Ashwell R.I.S."/>
            <person name="Aubin K."/>
            <person name="Babbage A.K."/>
            <person name="Bagguley C.L."/>
            <person name="Bailey J."/>
            <person name="Beasley H."/>
            <person name="Bethel G."/>
            <person name="Bird C.P."/>
            <person name="Bray-Allen S."/>
            <person name="Brown J.Y."/>
            <person name="Brown A.J."/>
            <person name="Buckley D."/>
            <person name="Burton J."/>
            <person name="Bye J."/>
            <person name="Carder C."/>
            <person name="Chapman J.C."/>
            <person name="Clark S.Y."/>
            <person name="Clarke G."/>
            <person name="Clee C."/>
            <person name="Cobley V."/>
            <person name="Collier R.E."/>
            <person name="Corby N."/>
            <person name="Coville G.J."/>
            <person name="Davies J."/>
            <person name="Deadman R."/>
            <person name="Dunn M."/>
            <person name="Earthrowl M."/>
            <person name="Ellington A.G."/>
            <person name="Errington H."/>
            <person name="Frankish A."/>
            <person name="Frankland J."/>
            <person name="French L."/>
            <person name="Garner P."/>
            <person name="Garnett J."/>
            <person name="Gay L."/>
            <person name="Ghori M.R.J."/>
            <person name="Gibson R."/>
            <person name="Gilby L.M."/>
            <person name="Gillett W."/>
            <person name="Glithero R.J."/>
            <person name="Grafham D.V."/>
            <person name="Griffiths C."/>
            <person name="Griffiths-Jones S."/>
            <person name="Grocock R."/>
            <person name="Hammond S."/>
            <person name="Harrison E.S.I."/>
            <person name="Hart E."/>
            <person name="Haugen E."/>
            <person name="Heath P.D."/>
            <person name="Holmes S."/>
            <person name="Holt K."/>
            <person name="Howden P.J."/>
            <person name="Hunt A.R."/>
            <person name="Hunt S.E."/>
            <person name="Hunter G."/>
            <person name="Isherwood J."/>
            <person name="James R."/>
            <person name="Johnson C."/>
            <person name="Johnson D."/>
            <person name="Joy A."/>
            <person name="Kay M."/>
            <person name="Kershaw J.K."/>
            <person name="Kibukawa M."/>
            <person name="Kimberley A.M."/>
            <person name="King A."/>
            <person name="Knights A.J."/>
            <person name="Lad H."/>
            <person name="Laird G."/>
            <person name="Lawlor S."/>
            <person name="Leongamornlert D.A."/>
            <person name="Lloyd D.M."/>
            <person name="Loveland J."/>
            <person name="Lovell J."/>
            <person name="Lush M.J."/>
            <person name="Lyne R."/>
            <person name="Martin S."/>
            <person name="Mashreghi-Mohammadi M."/>
            <person name="Matthews L."/>
            <person name="Matthews N.S.W."/>
            <person name="McLaren S."/>
            <person name="Milne S."/>
            <person name="Mistry S."/>
            <person name="Moore M.J.F."/>
            <person name="Nickerson T."/>
            <person name="O'Dell C.N."/>
            <person name="Oliver K."/>
            <person name="Palmeiri A."/>
            <person name="Palmer S.A."/>
            <person name="Parker A."/>
            <person name="Patel D."/>
            <person name="Pearce A.V."/>
            <person name="Peck A.I."/>
            <person name="Pelan S."/>
            <person name="Phelps K."/>
            <person name="Phillimore B.J."/>
            <person name="Plumb R."/>
            <person name="Rajan J."/>
            <person name="Raymond C."/>
            <person name="Rouse G."/>
            <person name="Saenphimmachak C."/>
            <person name="Sehra H.K."/>
            <person name="Sheridan E."/>
            <person name="Shownkeen R."/>
            <person name="Sims S."/>
            <person name="Skuce C.D."/>
            <person name="Smith M."/>
            <person name="Steward C."/>
            <person name="Subramanian S."/>
            <person name="Sycamore N."/>
            <person name="Tracey A."/>
            <person name="Tromans A."/>
            <person name="Van Helmond Z."/>
            <person name="Wall M."/>
            <person name="Wallis J.M."/>
            <person name="White S."/>
            <person name="Whitehead S.L."/>
            <person name="Wilkinson J.E."/>
            <person name="Willey D.L."/>
            <person name="Williams H."/>
            <person name="Wilming L."/>
            <person name="Wray P.W."/>
            <person name="Wu Z."/>
            <person name="Coulson A."/>
            <person name="Vaudin M."/>
            <person name="Sulston J.E."/>
            <person name="Durbin R.M."/>
            <person name="Hubbard T."/>
            <person name="Wooster R."/>
            <person name="Dunham I."/>
            <person name="Carter N.P."/>
            <person name="McVean G."/>
            <person name="Ross M.T."/>
            <person name="Harrow J."/>
            <person name="Olson M.V."/>
            <person name="Beck S."/>
            <person name="Rogers J."/>
            <person name="Bentley D.R."/>
        </authorList>
    </citation>
    <scope>NUCLEOTIDE SEQUENCE [LARGE SCALE GENOMIC DNA]</scope>
</reference>
<reference key="2">
    <citation type="journal article" date="2004" name="Genome Res.">
        <title>The status, quality, and expansion of the NIH full-length cDNA project: the Mammalian Gene Collection (MGC).</title>
        <authorList>
            <consortium name="The MGC Project Team"/>
        </authorList>
    </citation>
    <scope>NUCLEOTIDE SEQUENCE [LARGE SCALE MRNA]</scope>
</reference>
<reference key="3">
    <citation type="journal article" date="2005" name="J. Invest. Dermatol.">
        <title>Late cornified envelope family in differentiating epithelia -- response to calcium and ultraviolet irradiation.</title>
        <authorList>
            <person name="Jackson B."/>
            <person name="Tilli C.L."/>
            <person name="Hardman M."/>
            <person name="Avilion A."/>
            <person name="Macleod M."/>
            <person name="Ashcroft G."/>
            <person name="Byrne C."/>
        </authorList>
    </citation>
    <scope>NOMENCLATURE</scope>
    <scope>TISSUE SPECIFICITY</scope>
</reference>
<reference key="4">
    <citation type="journal article" date="2023" name="J. Invest. Dermatol.">
        <title>CYSRT1: An Antimicrobial Epidermal Protein that Can Interact with Late Cornified Envelope Proteins.</title>
        <authorList>
            <person name="Niehues H."/>
            <person name="Rikken G."/>
            <person name="Kersten F.F.J."/>
            <person name="Eeftens J.M."/>
            <person name="van Vlijmen-Willems I.M.J.J."/>
            <person name="Rodijk-Olthuis D."/>
            <person name="Jansen P.A.M."/>
            <person name="Hendriks W.J.A.J."/>
            <person name="Ederveen T.H.A."/>
            <person name="Schalkwijk J."/>
            <person name="van den Bogaard E.H."/>
            <person name="Zeeuwen P.L.J.M."/>
        </authorList>
    </citation>
    <scope>INTERACTION WITH CYSRT1</scope>
</reference>
<evidence type="ECO:0000256" key="1">
    <source>
        <dbReference type="SAM" id="MobiDB-lite"/>
    </source>
</evidence>
<evidence type="ECO:0000269" key="2">
    <source>
    </source>
</evidence>
<evidence type="ECO:0000269" key="3">
    <source>
    </source>
</evidence>
<evidence type="ECO:0000305" key="4"/>